<accession>Q4UMV4</accession>
<protein>
    <recommendedName>
        <fullName evidence="1">Exodeoxyribonuclease 7 large subunit</fullName>
        <ecNumber evidence="1">3.1.11.6</ecNumber>
    </recommendedName>
    <alternativeName>
        <fullName evidence="1">Exodeoxyribonuclease VII large subunit</fullName>
        <shortName evidence="1">Exonuclease VII large subunit</shortName>
    </alternativeName>
</protein>
<name>EX7L_RICFE</name>
<keyword id="KW-0963">Cytoplasm</keyword>
<keyword id="KW-0269">Exonuclease</keyword>
<keyword id="KW-0378">Hydrolase</keyword>
<keyword id="KW-0540">Nuclease</keyword>
<reference key="1">
    <citation type="journal article" date="2005" name="PLoS Biol.">
        <title>The genome sequence of Rickettsia felis identifies the first putative conjugative plasmid in an obligate intracellular parasite.</title>
        <authorList>
            <person name="Ogata H."/>
            <person name="Renesto P."/>
            <person name="Audic S."/>
            <person name="Robert C."/>
            <person name="Blanc G."/>
            <person name="Fournier P.-E."/>
            <person name="Parinello H."/>
            <person name="Claverie J.-M."/>
            <person name="Raoult D."/>
        </authorList>
    </citation>
    <scope>NUCLEOTIDE SEQUENCE [LARGE SCALE GENOMIC DNA]</scope>
    <source>
        <strain>ATCC VR-1525 / URRWXCal2</strain>
    </source>
</reference>
<proteinExistence type="inferred from homology"/>
<organism>
    <name type="scientific">Rickettsia felis (strain ATCC VR-1525 / URRWXCal2)</name>
    <name type="common">Rickettsia azadi</name>
    <dbReference type="NCBI Taxonomy" id="315456"/>
    <lineage>
        <taxon>Bacteria</taxon>
        <taxon>Pseudomonadati</taxon>
        <taxon>Pseudomonadota</taxon>
        <taxon>Alphaproteobacteria</taxon>
        <taxon>Rickettsiales</taxon>
        <taxon>Rickettsiaceae</taxon>
        <taxon>Rickettsieae</taxon>
        <taxon>Rickettsia</taxon>
        <taxon>spotted fever group</taxon>
    </lineage>
</organism>
<gene>
    <name evidence="1" type="primary">xseA</name>
    <name type="ordered locus">RF_0253</name>
</gene>
<dbReference type="EC" id="3.1.11.6" evidence="1"/>
<dbReference type="EMBL" id="CP000053">
    <property type="protein sequence ID" value="AAY61104.1"/>
    <property type="status" value="ALT_INIT"/>
    <property type="molecule type" value="Genomic_DNA"/>
</dbReference>
<dbReference type="SMR" id="Q4UMV4"/>
<dbReference type="STRING" id="315456.RF_0253"/>
<dbReference type="KEGG" id="rfe:RF_0253"/>
<dbReference type="eggNOG" id="COG1570">
    <property type="taxonomic scope" value="Bacteria"/>
</dbReference>
<dbReference type="HOGENOM" id="CLU_023625_2_0_5"/>
<dbReference type="OrthoDB" id="9802795at2"/>
<dbReference type="Proteomes" id="UP000008548">
    <property type="component" value="Chromosome"/>
</dbReference>
<dbReference type="GO" id="GO:0005737">
    <property type="term" value="C:cytoplasm"/>
    <property type="evidence" value="ECO:0007669"/>
    <property type="project" value="UniProtKB-SubCell"/>
</dbReference>
<dbReference type="GO" id="GO:0009318">
    <property type="term" value="C:exodeoxyribonuclease VII complex"/>
    <property type="evidence" value="ECO:0007669"/>
    <property type="project" value="InterPro"/>
</dbReference>
<dbReference type="GO" id="GO:0008855">
    <property type="term" value="F:exodeoxyribonuclease VII activity"/>
    <property type="evidence" value="ECO:0007669"/>
    <property type="project" value="UniProtKB-UniRule"/>
</dbReference>
<dbReference type="GO" id="GO:0003676">
    <property type="term" value="F:nucleic acid binding"/>
    <property type="evidence" value="ECO:0007669"/>
    <property type="project" value="InterPro"/>
</dbReference>
<dbReference type="GO" id="GO:0006308">
    <property type="term" value="P:DNA catabolic process"/>
    <property type="evidence" value="ECO:0007669"/>
    <property type="project" value="UniProtKB-UniRule"/>
</dbReference>
<dbReference type="CDD" id="cd04489">
    <property type="entry name" value="ExoVII_LU_OBF"/>
    <property type="match status" value="1"/>
</dbReference>
<dbReference type="HAMAP" id="MF_00378">
    <property type="entry name" value="Exonuc_7_L"/>
    <property type="match status" value="1"/>
</dbReference>
<dbReference type="InterPro" id="IPR003753">
    <property type="entry name" value="Exonuc_VII_L"/>
</dbReference>
<dbReference type="InterPro" id="IPR020579">
    <property type="entry name" value="Exonuc_VII_lsu_C"/>
</dbReference>
<dbReference type="InterPro" id="IPR025824">
    <property type="entry name" value="OB-fold_nuc-bd_dom"/>
</dbReference>
<dbReference type="NCBIfam" id="TIGR00237">
    <property type="entry name" value="xseA"/>
    <property type="match status" value="1"/>
</dbReference>
<dbReference type="PANTHER" id="PTHR30008">
    <property type="entry name" value="EXODEOXYRIBONUCLEASE 7 LARGE SUBUNIT"/>
    <property type="match status" value="1"/>
</dbReference>
<dbReference type="PANTHER" id="PTHR30008:SF0">
    <property type="entry name" value="EXODEOXYRIBONUCLEASE 7 LARGE SUBUNIT"/>
    <property type="match status" value="1"/>
</dbReference>
<dbReference type="Pfam" id="PF02601">
    <property type="entry name" value="Exonuc_VII_L"/>
    <property type="match status" value="1"/>
</dbReference>
<dbReference type="Pfam" id="PF13742">
    <property type="entry name" value="tRNA_anti_2"/>
    <property type="match status" value="1"/>
</dbReference>
<comment type="function">
    <text evidence="1">Bidirectionally degrades single-stranded DNA into large acid-insoluble oligonucleotides, which are then degraded further into small acid-soluble oligonucleotides.</text>
</comment>
<comment type="catalytic activity">
    <reaction evidence="1">
        <text>Exonucleolytic cleavage in either 5'- to 3'- or 3'- to 5'-direction to yield nucleoside 5'-phosphates.</text>
        <dbReference type="EC" id="3.1.11.6"/>
    </reaction>
</comment>
<comment type="subunit">
    <text evidence="1">Heterooligomer composed of large and small subunits.</text>
</comment>
<comment type="subcellular location">
    <subcellularLocation>
        <location evidence="1">Cytoplasm</location>
    </subcellularLocation>
</comment>
<comment type="similarity">
    <text evidence="1">Belongs to the XseA family.</text>
</comment>
<comment type="sequence caution" evidence="2">
    <conflict type="erroneous initiation">
        <sequence resource="EMBL-CDS" id="AAY61104"/>
    </conflict>
</comment>
<evidence type="ECO:0000255" key="1">
    <source>
        <dbReference type="HAMAP-Rule" id="MF_00378"/>
    </source>
</evidence>
<evidence type="ECO:0000305" key="2"/>
<feature type="chain" id="PRO_0000273122" description="Exodeoxyribonuclease 7 large subunit">
    <location>
        <begin position="1"/>
        <end position="450"/>
    </location>
</feature>
<sequence length="450" mass="50400">MLDNFIANQATKEFSVSEISNKIKELLENNFGYIKVKGEISGLKIASSGHAYFNLKENTAILACTCWRPILAKIKFPLNDGMEVVISGKLSSYAGNSRYQLSVDNLQPAGLGAMLQILNERKARLEKEGLFNKIRIPIPFLPDKIGVITSITGAVIKDIIHRIRERFPTRIIIWPVSVQGENSGNEIAEAIEGFNNLEEINKPSVIIVARGGGSIEDLWSFNDEILVRAAYNSKIPIISAVGHEVDYTLIDLAADKRAPTPTAAAEFAVPVRSILNNTLQSYEKILLNNTSRLIKYHEQNIINYDKIHRYLSHYMNNKQQLLDETGFNLLDALPCFIELQETKIKSFSKERVNPAKILNYKTLELTHQTAYLSKSANNTLKNFEYKLELNSTLLASLDYNNVLKRGFAIVKGETGNFLSSKITAANEKIFNIKFSDGEIKVVRNTVIASD</sequence>